<proteinExistence type="evidence at protein level"/>
<comment type="alternative products">
    <event type="alternative splicing"/>
    <isoform>
        <id>Q8N309-1</id>
        <name>1</name>
        <sequence type="displayed"/>
    </isoform>
    <isoform>
        <id>Q8N309-2</id>
        <name>2</name>
        <sequence type="described" ref="VSP_029636"/>
    </isoform>
    <isoform>
        <id>Q8N309-3</id>
        <name>3</name>
        <sequence type="described" ref="VSP_029636 VSP_029637"/>
    </isoform>
</comment>
<reference key="1">
    <citation type="journal article" date="2004" name="Nat. Genet.">
        <title>Complete sequencing and characterization of 21,243 full-length human cDNAs.</title>
        <authorList>
            <person name="Ota T."/>
            <person name="Suzuki Y."/>
            <person name="Nishikawa T."/>
            <person name="Otsuki T."/>
            <person name="Sugiyama T."/>
            <person name="Irie R."/>
            <person name="Wakamatsu A."/>
            <person name="Hayashi K."/>
            <person name="Sato H."/>
            <person name="Nagai K."/>
            <person name="Kimura K."/>
            <person name="Makita H."/>
            <person name="Sekine M."/>
            <person name="Obayashi M."/>
            <person name="Nishi T."/>
            <person name="Shibahara T."/>
            <person name="Tanaka T."/>
            <person name="Ishii S."/>
            <person name="Yamamoto J."/>
            <person name="Saito K."/>
            <person name="Kawai Y."/>
            <person name="Isono Y."/>
            <person name="Nakamura Y."/>
            <person name="Nagahari K."/>
            <person name="Murakami K."/>
            <person name="Yasuda T."/>
            <person name="Iwayanagi T."/>
            <person name="Wagatsuma M."/>
            <person name="Shiratori A."/>
            <person name="Sudo H."/>
            <person name="Hosoiri T."/>
            <person name="Kaku Y."/>
            <person name="Kodaira H."/>
            <person name="Kondo H."/>
            <person name="Sugawara M."/>
            <person name="Takahashi M."/>
            <person name="Kanda K."/>
            <person name="Yokoi T."/>
            <person name="Furuya T."/>
            <person name="Kikkawa E."/>
            <person name="Omura Y."/>
            <person name="Abe K."/>
            <person name="Kamihara K."/>
            <person name="Katsuta N."/>
            <person name="Sato K."/>
            <person name="Tanikawa M."/>
            <person name="Yamazaki M."/>
            <person name="Ninomiya K."/>
            <person name="Ishibashi T."/>
            <person name="Yamashita H."/>
            <person name="Murakawa K."/>
            <person name="Fujimori K."/>
            <person name="Tanai H."/>
            <person name="Kimata M."/>
            <person name="Watanabe M."/>
            <person name="Hiraoka S."/>
            <person name="Chiba Y."/>
            <person name="Ishida S."/>
            <person name="Ono Y."/>
            <person name="Takiguchi S."/>
            <person name="Watanabe S."/>
            <person name="Yosida M."/>
            <person name="Hotuta T."/>
            <person name="Kusano J."/>
            <person name="Kanehori K."/>
            <person name="Takahashi-Fujii A."/>
            <person name="Hara H."/>
            <person name="Tanase T.-O."/>
            <person name="Nomura Y."/>
            <person name="Togiya S."/>
            <person name="Komai F."/>
            <person name="Hara R."/>
            <person name="Takeuchi K."/>
            <person name="Arita M."/>
            <person name="Imose N."/>
            <person name="Musashino K."/>
            <person name="Yuuki H."/>
            <person name="Oshima A."/>
            <person name="Sasaki N."/>
            <person name="Aotsuka S."/>
            <person name="Yoshikawa Y."/>
            <person name="Matsunawa H."/>
            <person name="Ichihara T."/>
            <person name="Shiohata N."/>
            <person name="Sano S."/>
            <person name="Moriya S."/>
            <person name="Momiyama H."/>
            <person name="Satoh N."/>
            <person name="Takami S."/>
            <person name="Terashima Y."/>
            <person name="Suzuki O."/>
            <person name="Nakagawa S."/>
            <person name="Senoh A."/>
            <person name="Mizoguchi H."/>
            <person name="Goto Y."/>
            <person name="Shimizu F."/>
            <person name="Wakebe H."/>
            <person name="Hishigaki H."/>
            <person name="Watanabe T."/>
            <person name="Sugiyama A."/>
            <person name="Takemoto M."/>
            <person name="Kawakami B."/>
            <person name="Yamazaki M."/>
            <person name="Watanabe K."/>
            <person name="Kumagai A."/>
            <person name="Itakura S."/>
            <person name="Fukuzumi Y."/>
            <person name="Fujimori Y."/>
            <person name="Komiyama M."/>
            <person name="Tashiro H."/>
            <person name="Tanigami A."/>
            <person name="Fujiwara T."/>
            <person name="Ono T."/>
            <person name="Yamada K."/>
            <person name="Fujii Y."/>
            <person name="Ozaki K."/>
            <person name="Hirao M."/>
            <person name="Ohmori Y."/>
            <person name="Kawabata A."/>
            <person name="Hikiji T."/>
            <person name="Kobatake N."/>
            <person name="Inagaki H."/>
            <person name="Ikema Y."/>
            <person name="Okamoto S."/>
            <person name="Okitani R."/>
            <person name="Kawakami T."/>
            <person name="Noguchi S."/>
            <person name="Itoh T."/>
            <person name="Shigeta K."/>
            <person name="Senba T."/>
            <person name="Matsumura K."/>
            <person name="Nakajima Y."/>
            <person name="Mizuno T."/>
            <person name="Morinaga M."/>
            <person name="Sasaki M."/>
            <person name="Togashi T."/>
            <person name="Oyama M."/>
            <person name="Hata H."/>
            <person name="Watanabe M."/>
            <person name="Komatsu T."/>
            <person name="Mizushima-Sugano J."/>
            <person name="Satoh T."/>
            <person name="Shirai Y."/>
            <person name="Takahashi Y."/>
            <person name="Nakagawa K."/>
            <person name="Okumura K."/>
            <person name="Nagase T."/>
            <person name="Nomura N."/>
            <person name="Kikuchi H."/>
            <person name="Masuho Y."/>
            <person name="Yamashita R."/>
            <person name="Nakai K."/>
            <person name="Yada T."/>
            <person name="Nakamura Y."/>
            <person name="Ohara O."/>
            <person name="Isogai T."/>
            <person name="Sugano S."/>
        </authorList>
    </citation>
    <scope>NUCLEOTIDE SEQUENCE [LARGE SCALE MRNA] (ISOFORM 3)</scope>
    <scope>VARIANT LYS-256</scope>
    <source>
        <tissue>Testis</tissue>
    </source>
</reference>
<reference key="2">
    <citation type="journal article" date="2006" name="Nature">
        <title>The finished DNA sequence of human chromosome 12.</title>
        <authorList>
            <person name="Scherer S.E."/>
            <person name="Muzny D.M."/>
            <person name="Buhay C.J."/>
            <person name="Chen R."/>
            <person name="Cree A."/>
            <person name="Ding Y."/>
            <person name="Dugan-Rocha S."/>
            <person name="Gill R."/>
            <person name="Gunaratne P."/>
            <person name="Harris R.A."/>
            <person name="Hawes A.C."/>
            <person name="Hernandez J."/>
            <person name="Hodgson A.V."/>
            <person name="Hume J."/>
            <person name="Jackson A."/>
            <person name="Khan Z.M."/>
            <person name="Kovar-Smith C."/>
            <person name="Lewis L.R."/>
            <person name="Lozado R.J."/>
            <person name="Metzker M.L."/>
            <person name="Milosavljevic A."/>
            <person name="Miner G.R."/>
            <person name="Montgomery K.T."/>
            <person name="Morgan M.B."/>
            <person name="Nazareth L.V."/>
            <person name="Scott G."/>
            <person name="Sodergren E."/>
            <person name="Song X.-Z."/>
            <person name="Steffen D."/>
            <person name="Lovering R.C."/>
            <person name="Wheeler D.A."/>
            <person name="Worley K.C."/>
            <person name="Yuan Y."/>
            <person name="Zhang Z."/>
            <person name="Adams C.Q."/>
            <person name="Ansari-Lari M.A."/>
            <person name="Ayele M."/>
            <person name="Brown M.J."/>
            <person name="Chen G."/>
            <person name="Chen Z."/>
            <person name="Clerc-Blankenburg K.P."/>
            <person name="Davis C."/>
            <person name="Delgado O."/>
            <person name="Dinh H.H."/>
            <person name="Draper H."/>
            <person name="Gonzalez-Garay M.L."/>
            <person name="Havlak P."/>
            <person name="Jackson L.R."/>
            <person name="Jacob L.S."/>
            <person name="Kelly S.H."/>
            <person name="Li L."/>
            <person name="Li Z."/>
            <person name="Liu J."/>
            <person name="Liu W."/>
            <person name="Lu J."/>
            <person name="Maheshwari M."/>
            <person name="Nguyen B.-V."/>
            <person name="Okwuonu G.O."/>
            <person name="Pasternak S."/>
            <person name="Perez L.M."/>
            <person name="Plopper F.J.H."/>
            <person name="Santibanez J."/>
            <person name="Shen H."/>
            <person name="Tabor P.E."/>
            <person name="Verduzco D."/>
            <person name="Waldron L."/>
            <person name="Wang Q."/>
            <person name="Williams G.A."/>
            <person name="Zhang J."/>
            <person name="Zhou J."/>
            <person name="Allen C.C."/>
            <person name="Amin A.G."/>
            <person name="Anyalebechi V."/>
            <person name="Bailey M."/>
            <person name="Barbaria J.A."/>
            <person name="Bimage K.E."/>
            <person name="Bryant N.P."/>
            <person name="Burch P.E."/>
            <person name="Burkett C.E."/>
            <person name="Burrell K.L."/>
            <person name="Calderon E."/>
            <person name="Cardenas V."/>
            <person name="Carter K."/>
            <person name="Casias K."/>
            <person name="Cavazos I."/>
            <person name="Cavazos S.R."/>
            <person name="Ceasar H."/>
            <person name="Chacko J."/>
            <person name="Chan S.N."/>
            <person name="Chavez D."/>
            <person name="Christopoulos C."/>
            <person name="Chu J."/>
            <person name="Cockrell R."/>
            <person name="Cox C.D."/>
            <person name="Dang M."/>
            <person name="Dathorne S.R."/>
            <person name="David R."/>
            <person name="Davis C.M."/>
            <person name="Davy-Carroll L."/>
            <person name="Deshazo D.R."/>
            <person name="Donlin J.E."/>
            <person name="D'Souza L."/>
            <person name="Eaves K.A."/>
            <person name="Egan A."/>
            <person name="Emery-Cohen A.J."/>
            <person name="Escotto M."/>
            <person name="Flagg N."/>
            <person name="Forbes L.D."/>
            <person name="Gabisi A.M."/>
            <person name="Garza M."/>
            <person name="Hamilton C."/>
            <person name="Henderson N."/>
            <person name="Hernandez O."/>
            <person name="Hines S."/>
            <person name="Hogues M.E."/>
            <person name="Huang M."/>
            <person name="Idlebird D.G."/>
            <person name="Johnson R."/>
            <person name="Jolivet A."/>
            <person name="Jones S."/>
            <person name="Kagan R."/>
            <person name="King L.M."/>
            <person name="Leal B."/>
            <person name="Lebow H."/>
            <person name="Lee S."/>
            <person name="LeVan J.M."/>
            <person name="Lewis L.C."/>
            <person name="London P."/>
            <person name="Lorensuhewa L.M."/>
            <person name="Loulseged H."/>
            <person name="Lovett D.A."/>
            <person name="Lucier A."/>
            <person name="Lucier R.L."/>
            <person name="Ma J."/>
            <person name="Madu R.C."/>
            <person name="Mapua P."/>
            <person name="Martindale A.D."/>
            <person name="Martinez E."/>
            <person name="Massey E."/>
            <person name="Mawhiney S."/>
            <person name="Meador M.G."/>
            <person name="Mendez S."/>
            <person name="Mercado C."/>
            <person name="Mercado I.C."/>
            <person name="Merritt C.E."/>
            <person name="Miner Z.L."/>
            <person name="Minja E."/>
            <person name="Mitchell T."/>
            <person name="Mohabbat F."/>
            <person name="Mohabbat K."/>
            <person name="Montgomery B."/>
            <person name="Moore N."/>
            <person name="Morris S."/>
            <person name="Munidasa M."/>
            <person name="Ngo R.N."/>
            <person name="Nguyen N.B."/>
            <person name="Nickerson E."/>
            <person name="Nwaokelemeh O.O."/>
            <person name="Nwokenkwo S."/>
            <person name="Obregon M."/>
            <person name="Oguh M."/>
            <person name="Oragunye N."/>
            <person name="Oviedo R.J."/>
            <person name="Parish B.J."/>
            <person name="Parker D.N."/>
            <person name="Parrish J."/>
            <person name="Parks K.L."/>
            <person name="Paul H.A."/>
            <person name="Payton B.A."/>
            <person name="Perez A."/>
            <person name="Perrin W."/>
            <person name="Pickens A."/>
            <person name="Primus E.L."/>
            <person name="Pu L.-L."/>
            <person name="Puazo M."/>
            <person name="Quiles M.M."/>
            <person name="Quiroz J.B."/>
            <person name="Rabata D."/>
            <person name="Reeves K."/>
            <person name="Ruiz S.J."/>
            <person name="Shao H."/>
            <person name="Sisson I."/>
            <person name="Sonaike T."/>
            <person name="Sorelle R.P."/>
            <person name="Sutton A.E."/>
            <person name="Svatek A.F."/>
            <person name="Svetz L.A."/>
            <person name="Tamerisa K.S."/>
            <person name="Taylor T.R."/>
            <person name="Teague B."/>
            <person name="Thomas N."/>
            <person name="Thorn R.D."/>
            <person name="Trejos Z.Y."/>
            <person name="Trevino B.K."/>
            <person name="Ukegbu O.N."/>
            <person name="Urban J.B."/>
            <person name="Vasquez L.I."/>
            <person name="Vera V.A."/>
            <person name="Villasana D.M."/>
            <person name="Wang L."/>
            <person name="Ward-Moore S."/>
            <person name="Warren J.T."/>
            <person name="Wei X."/>
            <person name="White F."/>
            <person name="Williamson A.L."/>
            <person name="Wleczyk R."/>
            <person name="Wooden H.S."/>
            <person name="Wooden S.H."/>
            <person name="Yen J."/>
            <person name="Yoon L."/>
            <person name="Yoon V."/>
            <person name="Zorrilla S.E."/>
            <person name="Nelson D."/>
            <person name="Kucherlapati R."/>
            <person name="Weinstock G."/>
            <person name="Gibbs R.A."/>
        </authorList>
    </citation>
    <scope>NUCLEOTIDE SEQUENCE [LARGE SCALE GENOMIC DNA]</scope>
</reference>
<reference key="3">
    <citation type="journal article" date="2004" name="Genome Res.">
        <title>The status, quality, and expansion of the NIH full-length cDNA project: the Mammalian Gene Collection (MGC).</title>
        <authorList>
            <consortium name="The MGC Project Team"/>
        </authorList>
    </citation>
    <scope>NUCLEOTIDE SEQUENCE [LARGE SCALE MRNA] (ISOFORM 2)</scope>
    <source>
        <tissue>Brain</tissue>
    </source>
</reference>
<organism>
    <name type="scientific">Homo sapiens</name>
    <name type="common">Human</name>
    <dbReference type="NCBI Taxonomy" id="9606"/>
    <lineage>
        <taxon>Eukaryota</taxon>
        <taxon>Metazoa</taxon>
        <taxon>Chordata</taxon>
        <taxon>Craniata</taxon>
        <taxon>Vertebrata</taxon>
        <taxon>Euteleostomi</taxon>
        <taxon>Mammalia</taxon>
        <taxon>Eutheria</taxon>
        <taxon>Euarchontoglires</taxon>
        <taxon>Primates</taxon>
        <taxon>Haplorrhini</taxon>
        <taxon>Catarrhini</taxon>
        <taxon>Hominidae</taxon>
        <taxon>Homo</taxon>
    </lineage>
</organism>
<feature type="chain" id="PRO_0000311908" description="Leucine-rich repeat-containing protein 43">
    <location>
        <begin position="1"/>
        <end position="656"/>
    </location>
</feature>
<feature type="repeat" description="LRR 1">
    <location>
        <begin position="150"/>
        <end position="170"/>
    </location>
</feature>
<feature type="repeat" description="LRR 2">
    <location>
        <begin position="172"/>
        <end position="193"/>
    </location>
</feature>
<feature type="repeat" description="LRR 3">
    <location>
        <begin position="196"/>
        <end position="215"/>
    </location>
</feature>
<feature type="repeat" description="LRR 4">
    <location>
        <begin position="223"/>
        <end position="244"/>
    </location>
</feature>
<feature type="domain" description="LRRCT">
    <location>
        <begin position="258"/>
        <end position="296"/>
    </location>
</feature>
<feature type="region of interest" description="Disordered" evidence="1">
    <location>
        <begin position="1"/>
        <end position="25"/>
    </location>
</feature>
<feature type="region of interest" description="Disordered" evidence="1">
    <location>
        <begin position="512"/>
        <end position="554"/>
    </location>
</feature>
<feature type="compositionally biased region" description="Acidic residues" evidence="1">
    <location>
        <begin position="1"/>
        <end position="13"/>
    </location>
</feature>
<feature type="compositionally biased region" description="Basic and acidic residues" evidence="1">
    <location>
        <begin position="517"/>
        <end position="544"/>
    </location>
</feature>
<feature type="splice variant" id="VSP_029636" description="In isoform 2 and isoform 3." evidence="3 4">
    <location>
        <begin position="1"/>
        <end position="185"/>
    </location>
</feature>
<feature type="splice variant" id="VSP_029637" description="In isoform 3." evidence="3">
    <original>W</original>
    <variation>WGRVRLGLGDAVLTAAACVFLLFSELRSICFLVCGSRLLAPCSPGFLTPRRSCSPSR</variation>
    <location>
        <position position="221"/>
    </location>
</feature>
<feature type="sequence variant" id="VAR_037338" description="In dbSNP:rs11060094." evidence="2">
    <original>Q</original>
    <variation>K</variation>
    <location>
        <position position="256"/>
    </location>
</feature>
<feature type="sequence variant" id="VAR_082884" description="In dbSNP:rs10847725." evidence="5">
    <original>L</original>
    <variation>P</variation>
    <location sequence="Q8N309-3">
        <position position="61"/>
    </location>
</feature>
<accession>Q8N309</accession>
<accession>Q6ZVT9</accession>
<sequence>MEASYESESESESEAGPGTQRPGTGTVSAAVREHLRKLCLREFPCGAGSWNKSRFLPQTWRTWRELVPREEDVVSPGEETVEALLGLVRSRHSPWALLNNSNAEDSFLRELAIRNPLTITDTFFYSYFRSLRVIDKKVTLVDKDLLKFLKLEELVLSANRIKEVDATNLPPTLKVLELYGNEISSMECLCAHPPAGLQHLGLGHNKLLGPLESLYVTANHWPNLVSLDLGFNDLTDLQSMVTSLRTLRHLRLLVLQGNPLALVPYYRGLTIDSLAQLCVLDDITVSPNEKHLFRGLSLNGDLLAQEAQFVVTIGNIRGVLDTSVLDPEPRPEGPFITYNYYVTYDFVKDEEGEMNESAGVLAEIVKPSPSLELLVEESPEEVVEDVIEDIVEEVTEEVEGSLESEVEESGESELSVISGPSTILQMPRASAEELAKLRLRIDPRLCPSPGTVLFSTAHKPWAEVIPCSYEMQHSLRDLVPLKAFLLAGTTVTIVEEKILSWPVVLPAVDSPLSAKKGKGEKDKKGKEKDRTGKGEKEPAKEWKVLKKKKEPPKELRQDPPILQVLGRGLVILEPLLAGEPLVSTVCNFGVVRTLTSDRLTLARDSKKIKKVAKKEKPKAVIPIYEGDYHPEPLTVEVQIQLNQCRSAEEALRMFAV</sequence>
<name>LRC43_HUMAN</name>
<gene>
    <name type="primary">LRRC43</name>
</gene>
<evidence type="ECO:0000256" key="1">
    <source>
        <dbReference type="SAM" id="MobiDB-lite"/>
    </source>
</evidence>
<evidence type="ECO:0000269" key="2">
    <source>
    </source>
</evidence>
<evidence type="ECO:0000303" key="3">
    <source>
    </source>
</evidence>
<evidence type="ECO:0000303" key="4">
    <source>
    </source>
</evidence>
<evidence type="ECO:0000305" key="5"/>
<protein>
    <recommendedName>
        <fullName>Leucine-rich repeat-containing protein 43</fullName>
    </recommendedName>
</protein>
<dbReference type="EMBL" id="AK124107">
    <property type="protein sequence ID" value="BAC85772.1"/>
    <property type="molecule type" value="mRNA"/>
</dbReference>
<dbReference type="EMBL" id="AC048338">
    <property type="status" value="NOT_ANNOTATED_CDS"/>
    <property type="molecule type" value="Genomic_DNA"/>
</dbReference>
<dbReference type="EMBL" id="BC029245">
    <property type="protein sequence ID" value="AAH29245.1"/>
    <property type="molecule type" value="mRNA"/>
</dbReference>
<dbReference type="CCDS" id="CCDS45001.1">
    <molecule id="Q8N309-1"/>
</dbReference>
<dbReference type="RefSeq" id="NP_001091989.1">
    <molecule id="Q8N309-1"/>
    <property type="nucleotide sequence ID" value="NM_001098519.2"/>
</dbReference>
<dbReference type="RefSeq" id="NP_689972.3">
    <molecule id="Q8N309-2"/>
    <property type="nucleotide sequence ID" value="NM_152759.4"/>
</dbReference>
<dbReference type="SMR" id="Q8N309"/>
<dbReference type="BioGRID" id="129010">
    <property type="interactions" value="2"/>
</dbReference>
<dbReference type="FunCoup" id="Q8N309">
    <property type="interactions" value="46"/>
</dbReference>
<dbReference type="STRING" id="9606.ENSP00000344233"/>
<dbReference type="GlyGen" id="Q8N309">
    <property type="glycosylation" value="2 sites, 1 O-linked glycan (2 sites)"/>
</dbReference>
<dbReference type="iPTMnet" id="Q8N309"/>
<dbReference type="PhosphoSitePlus" id="Q8N309"/>
<dbReference type="BioMuta" id="LRRC43"/>
<dbReference type="DMDM" id="162416235"/>
<dbReference type="MassIVE" id="Q8N309"/>
<dbReference type="PaxDb" id="9606-ENSP00000344233"/>
<dbReference type="PeptideAtlas" id="Q8N309"/>
<dbReference type="ProteomicsDB" id="71751">
    <molecule id="Q8N309-1"/>
</dbReference>
<dbReference type="ProteomicsDB" id="71752">
    <molecule id="Q8N309-2"/>
</dbReference>
<dbReference type="ProteomicsDB" id="71753">
    <molecule id="Q8N309-3"/>
</dbReference>
<dbReference type="Antibodypedia" id="52948">
    <property type="antibodies" value="24 antibodies from 14 providers"/>
</dbReference>
<dbReference type="DNASU" id="254050"/>
<dbReference type="Ensembl" id="ENST00000339777.5">
    <molecule id="Q8N309-1"/>
    <property type="protein sequence ID" value="ENSP00000344233.4"/>
    <property type="gene ID" value="ENSG00000158113.13"/>
</dbReference>
<dbReference type="GeneID" id="254050"/>
<dbReference type="KEGG" id="hsa:254050"/>
<dbReference type="MANE-Select" id="ENST00000339777.5">
    <property type="protein sequence ID" value="ENSP00000344233.4"/>
    <property type="RefSeq nucleotide sequence ID" value="NM_001098519.2"/>
    <property type="RefSeq protein sequence ID" value="NP_001091989.1"/>
</dbReference>
<dbReference type="UCSC" id="uc009zxm.4">
    <molecule id="Q8N309-1"/>
    <property type="organism name" value="human"/>
</dbReference>
<dbReference type="AGR" id="HGNC:28562"/>
<dbReference type="CTD" id="254050"/>
<dbReference type="DisGeNET" id="254050"/>
<dbReference type="GeneCards" id="LRRC43"/>
<dbReference type="HGNC" id="HGNC:28562">
    <property type="gene designation" value="LRRC43"/>
</dbReference>
<dbReference type="HPA" id="ENSG00000158113">
    <property type="expression patterns" value="Tissue enhanced (choroid plexus, fallopian tube)"/>
</dbReference>
<dbReference type="neXtProt" id="NX_Q8N309"/>
<dbReference type="OpenTargets" id="ENSG00000158113"/>
<dbReference type="PharmGKB" id="PA142671531"/>
<dbReference type="VEuPathDB" id="HostDB:ENSG00000158113"/>
<dbReference type="eggNOG" id="KOG0531">
    <property type="taxonomic scope" value="Eukaryota"/>
</dbReference>
<dbReference type="GeneTree" id="ENSGT00390000008994"/>
<dbReference type="HOGENOM" id="CLU_028116_0_0_1"/>
<dbReference type="InParanoid" id="Q8N309"/>
<dbReference type="OMA" id="AEVIPCN"/>
<dbReference type="OrthoDB" id="433501at2759"/>
<dbReference type="PAN-GO" id="Q8N309">
    <property type="GO annotations" value="3 GO annotations based on evolutionary models"/>
</dbReference>
<dbReference type="PhylomeDB" id="Q8N309"/>
<dbReference type="TreeFam" id="TF330806"/>
<dbReference type="PathwayCommons" id="Q8N309"/>
<dbReference type="BioGRID-ORCS" id="254050">
    <property type="hits" value="17 hits in 1143 CRISPR screens"/>
</dbReference>
<dbReference type="GenomeRNAi" id="254050"/>
<dbReference type="Pharos" id="Q8N309">
    <property type="development level" value="Tdark"/>
</dbReference>
<dbReference type="PRO" id="PR:Q8N309"/>
<dbReference type="Proteomes" id="UP000005640">
    <property type="component" value="Chromosome 12"/>
</dbReference>
<dbReference type="RNAct" id="Q8N309">
    <property type="molecule type" value="protein"/>
</dbReference>
<dbReference type="Bgee" id="ENSG00000158113">
    <property type="expression patterns" value="Expressed in right uterine tube and 130 other cell types or tissues"/>
</dbReference>
<dbReference type="ExpressionAtlas" id="Q8N309">
    <property type="expression patterns" value="baseline and differential"/>
</dbReference>
<dbReference type="Gene3D" id="3.80.10.10">
    <property type="entry name" value="Ribonuclease Inhibitor"/>
    <property type="match status" value="1"/>
</dbReference>
<dbReference type="InterPro" id="IPR050576">
    <property type="entry name" value="Cilia_flagella_integrity"/>
</dbReference>
<dbReference type="InterPro" id="IPR001611">
    <property type="entry name" value="Leu-rich_rpt"/>
</dbReference>
<dbReference type="InterPro" id="IPR032675">
    <property type="entry name" value="LRR_dom_sf"/>
</dbReference>
<dbReference type="PANTHER" id="PTHR45973:SF35">
    <property type="entry name" value="LEUCINE-RICH REPEAT-CONTAINING PROTEIN 43"/>
    <property type="match status" value="1"/>
</dbReference>
<dbReference type="PANTHER" id="PTHR45973">
    <property type="entry name" value="PROTEIN PHOSPHATASE 1 REGULATORY SUBUNIT SDS22-RELATED"/>
    <property type="match status" value="1"/>
</dbReference>
<dbReference type="Pfam" id="PF13855">
    <property type="entry name" value="LRR_8"/>
    <property type="match status" value="1"/>
</dbReference>
<dbReference type="SUPFAM" id="SSF52058">
    <property type="entry name" value="L domain-like"/>
    <property type="match status" value="1"/>
</dbReference>
<dbReference type="PROSITE" id="PS51450">
    <property type="entry name" value="LRR"/>
    <property type="match status" value="5"/>
</dbReference>
<keyword id="KW-0025">Alternative splicing</keyword>
<keyword id="KW-0433">Leucine-rich repeat</keyword>
<keyword id="KW-1267">Proteomics identification</keyword>
<keyword id="KW-1185">Reference proteome</keyword>
<keyword id="KW-0677">Repeat</keyword>